<dbReference type="EMBL" id="D16227">
    <property type="protein sequence ID" value="BAA03754.1"/>
    <property type="molecule type" value="mRNA"/>
</dbReference>
<dbReference type="EMBL" id="BC009846">
    <property type="protein sequence ID" value="AAH09846.1"/>
    <property type="molecule type" value="mRNA"/>
</dbReference>
<dbReference type="EMBL" id="BC017028">
    <property type="protein sequence ID" value="AAH17028.1"/>
    <property type="molecule type" value="mRNA"/>
</dbReference>
<dbReference type="EMBL" id="BC017482">
    <property type="protein sequence ID" value="AAH17482.1"/>
    <property type="molecule type" value="mRNA"/>
</dbReference>
<dbReference type="CCDS" id="CCDS1671.1"/>
<dbReference type="PIR" id="S47565">
    <property type="entry name" value="S47565"/>
</dbReference>
<dbReference type="RefSeq" id="NP_001245286.1">
    <property type="nucleotide sequence ID" value="NM_001258357.2"/>
</dbReference>
<dbReference type="RefSeq" id="NP_001245287.1">
    <property type="nucleotide sequence ID" value="NM_001258358.2"/>
</dbReference>
<dbReference type="RefSeq" id="NP_001245288.1">
    <property type="nucleotide sequence ID" value="NM_001258359.2"/>
</dbReference>
<dbReference type="RefSeq" id="NP_002140.2">
    <property type="nucleotide sequence ID" value="NM_002149.3"/>
</dbReference>
<dbReference type="RefSeq" id="NP_602293.1">
    <property type="nucleotide sequence ID" value="NM_134421.3"/>
</dbReference>
<dbReference type="RefSeq" id="XP_005246217.1">
    <property type="nucleotide sequence ID" value="XM_005246160.2"/>
</dbReference>
<dbReference type="RefSeq" id="XP_005246218.1">
    <property type="nucleotide sequence ID" value="XM_005246161.2"/>
</dbReference>
<dbReference type="RefSeq" id="XP_005246219.1">
    <property type="nucleotide sequence ID" value="XM_005246162.2"/>
</dbReference>
<dbReference type="RefSeq" id="XP_005246220.1">
    <property type="nucleotide sequence ID" value="XM_005246163.2"/>
</dbReference>
<dbReference type="RefSeq" id="XP_011508648.1">
    <property type="nucleotide sequence ID" value="XM_011510346.2"/>
</dbReference>
<dbReference type="RefSeq" id="XP_011508649.1">
    <property type="nucleotide sequence ID" value="XM_011510347.2"/>
</dbReference>
<dbReference type="RefSeq" id="XP_011508650.1">
    <property type="nucleotide sequence ID" value="XM_011510348.2"/>
</dbReference>
<dbReference type="RefSeq" id="XP_016859439.1">
    <property type="nucleotide sequence ID" value="XM_017003950.1"/>
</dbReference>
<dbReference type="RefSeq" id="XP_016859440.1">
    <property type="nucleotide sequence ID" value="XM_017003951.1"/>
</dbReference>
<dbReference type="RefSeq" id="XP_016859441.1">
    <property type="nucleotide sequence ID" value="XM_017003952.1"/>
</dbReference>
<dbReference type="RefSeq" id="XP_016859442.1">
    <property type="nucleotide sequence ID" value="XM_017003953.3"/>
</dbReference>
<dbReference type="RefSeq" id="XP_047300051.1">
    <property type="nucleotide sequence ID" value="XM_047444095.1"/>
</dbReference>
<dbReference type="RefSeq" id="XP_047300052.1">
    <property type="nucleotide sequence ID" value="XM_047444096.1"/>
</dbReference>
<dbReference type="RefSeq" id="XP_047300053.1">
    <property type="nucleotide sequence ID" value="XM_047444097.1"/>
</dbReference>
<dbReference type="RefSeq" id="XP_047300055.1">
    <property type="nucleotide sequence ID" value="XM_047444099.1"/>
</dbReference>
<dbReference type="RefSeq" id="XP_047300056.1">
    <property type="nucleotide sequence ID" value="XM_047444100.1"/>
</dbReference>
<dbReference type="RefSeq" id="XP_054197635.1">
    <property type="nucleotide sequence ID" value="XM_054341660.1"/>
</dbReference>
<dbReference type="RefSeq" id="XP_054197636.1">
    <property type="nucleotide sequence ID" value="XM_054341661.1"/>
</dbReference>
<dbReference type="RefSeq" id="XP_054197637.1">
    <property type="nucleotide sequence ID" value="XM_054341662.1"/>
</dbReference>
<dbReference type="RefSeq" id="XP_054197638.1">
    <property type="nucleotide sequence ID" value="XM_054341663.1"/>
</dbReference>
<dbReference type="RefSeq" id="XP_054197639.1">
    <property type="nucleotide sequence ID" value="XM_054341664.1"/>
</dbReference>
<dbReference type="RefSeq" id="XP_054197640.1">
    <property type="nucleotide sequence ID" value="XM_054341665.1"/>
</dbReference>
<dbReference type="RefSeq" id="XP_054197641.1">
    <property type="nucleotide sequence ID" value="XM_054341666.1"/>
</dbReference>
<dbReference type="RefSeq" id="XP_054197642.1">
    <property type="nucleotide sequence ID" value="XM_054341667.1"/>
</dbReference>
<dbReference type="RefSeq" id="XP_054197643.1">
    <property type="nucleotide sequence ID" value="XM_054341668.1"/>
</dbReference>
<dbReference type="RefSeq" id="XP_054197644.1">
    <property type="nucleotide sequence ID" value="XM_054341669.1"/>
</dbReference>
<dbReference type="RefSeq" id="XP_054197645.1">
    <property type="nucleotide sequence ID" value="XM_054341670.1"/>
</dbReference>
<dbReference type="RefSeq" id="XP_054197646.1">
    <property type="nucleotide sequence ID" value="XM_054341671.1"/>
</dbReference>
<dbReference type="RefSeq" id="XP_054197647.1">
    <property type="nucleotide sequence ID" value="XM_054341672.1"/>
</dbReference>
<dbReference type="RefSeq" id="XP_054197648.1">
    <property type="nucleotide sequence ID" value="XM_054341673.1"/>
</dbReference>
<dbReference type="RefSeq" id="XP_054197649.1">
    <property type="nucleotide sequence ID" value="XM_054341674.1"/>
</dbReference>
<dbReference type="RefSeq" id="XP_054197650.1">
    <property type="nucleotide sequence ID" value="XM_054341675.1"/>
</dbReference>
<dbReference type="RefSeq" id="XP_054197651.1">
    <property type="nucleotide sequence ID" value="XM_054341676.1"/>
</dbReference>
<dbReference type="PDB" id="5T7C">
    <property type="method" value="NMR"/>
    <property type="chains" value="A=2-193"/>
</dbReference>
<dbReference type="PDBsum" id="5T7C"/>
<dbReference type="SMR" id="P37235"/>
<dbReference type="BioGRID" id="109481">
    <property type="interactions" value="99"/>
</dbReference>
<dbReference type="FunCoup" id="P37235">
    <property type="interactions" value="908"/>
</dbReference>
<dbReference type="IntAct" id="P37235">
    <property type="interactions" value="82"/>
</dbReference>
<dbReference type="MINT" id="P37235"/>
<dbReference type="STRING" id="9606.ENSP00000483786"/>
<dbReference type="ChEMBL" id="CHEMBL4295755"/>
<dbReference type="iPTMnet" id="P37235"/>
<dbReference type="PhosphoSitePlus" id="P37235"/>
<dbReference type="SwissPalm" id="P37235"/>
<dbReference type="BioMuta" id="HPCAL1"/>
<dbReference type="DMDM" id="20455519"/>
<dbReference type="jPOST" id="P37235"/>
<dbReference type="MassIVE" id="P37235"/>
<dbReference type="PaxDb" id="9606-ENSP00000483786"/>
<dbReference type="PeptideAtlas" id="P37235"/>
<dbReference type="ProteomicsDB" id="55270"/>
<dbReference type="Pumba" id="P37235"/>
<dbReference type="Antibodypedia" id="26673">
    <property type="antibodies" value="146 antibodies from 24 providers"/>
</dbReference>
<dbReference type="DNASU" id="3241"/>
<dbReference type="Ensembl" id="ENST00000307845.8">
    <property type="protein sequence ID" value="ENSP00000310749.3"/>
    <property type="gene ID" value="ENSG00000115756.13"/>
</dbReference>
<dbReference type="Ensembl" id="ENST00000381765.7">
    <property type="protein sequence ID" value="ENSP00000371184.3"/>
    <property type="gene ID" value="ENSG00000115756.13"/>
</dbReference>
<dbReference type="Ensembl" id="ENST00000613496.4">
    <property type="protein sequence ID" value="ENSP00000478231.1"/>
    <property type="gene ID" value="ENSG00000115756.13"/>
</dbReference>
<dbReference type="Ensembl" id="ENST00000620771.4">
    <property type="protein sequence ID" value="ENSP00000483786.1"/>
    <property type="gene ID" value="ENSG00000115756.13"/>
</dbReference>
<dbReference type="Ensembl" id="ENST00000622018.4">
    <property type="protein sequence ID" value="ENSP00000482993.1"/>
    <property type="gene ID" value="ENSG00000115756.13"/>
</dbReference>
<dbReference type="GeneID" id="3241"/>
<dbReference type="KEGG" id="hsa:3241"/>
<dbReference type="MANE-Select" id="ENST00000307845.8">
    <property type="protein sequence ID" value="ENSP00000310749.3"/>
    <property type="RefSeq nucleotide sequence ID" value="NM_002149.4"/>
    <property type="RefSeq protein sequence ID" value="NP_002140.2"/>
</dbReference>
<dbReference type="AGR" id="HGNC:5145"/>
<dbReference type="CTD" id="3241"/>
<dbReference type="DisGeNET" id="3241"/>
<dbReference type="GeneCards" id="HPCAL1"/>
<dbReference type="HGNC" id="HGNC:5145">
    <property type="gene designation" value="HPCAL1"/>
</dbReference>
<dbReference type="HPA" id="ENSG00000115756">
    <property type="expression patterns" value="Tissue enriched (brain)"/>
</dbReference>
<dbReference type="MIM" id="600207">
    <property type="type" value="gene"/>
</dbReference>
<dbReference type="neXtProt" id="NX_P37235"/>
<dbReference type="OpenTargets" id="ENSG00000115756"/>
<dbReference type="PharmGKB" id="PA29418"/>
<dbReference type="VEuPathDB" id="HostDB:ENSG00000115756"/>
<dbReference type="eggNOG" id="KOG0044">
    <property type="taxonomic scope" value="Eukaryota"/>
</dbReference>
<dbReference type="GeneTree" id="ENSGT00940000154645"/>
<dbReference type="HOGENOM" id="CLU_072366_1_0_1"/>
<dbReference type="InParanoid" id="P37235"/>
<dbReference type="OMA" id="RQHTEFN"/>
<dbReference type="OrthoDB" id="191686at2759"/>
<dbReference type="PAN-GO" id="P37235">
    <property type="GO annotations" value="1 GO annotation based on evolutionary models"/>
</dbReference>
<dbReference type="PhylomeDB" id="P37235"/>
<dbReference type="TreeFam" id="TF300009"/>
<dbReference type="PathwayCommons" id="P37235"/>
<dbReference type="SignaLink" id="P37235"/>
<dbReference type="BioGRID-ORCS" id="3241">
    <property type="hits" value="52 hits in 1153 CRISPR screens"/>
</dbReference>
<dbReference type="ChiTaRS" id="HPCAL1">
    <property type="organism name" value="human"/>
</dbReference>
<dbReference type="GeneWiki" id="HPCAL1"/>
<dbReference type="GenomeRNAi" id="3241"/>
<dbReference type="Pharos" id="P37235">
    <property type="development level" value="Tbio"/>
</dbReference>
<dbReference type="PRO" id="PR:P37235"/>
<dbReference type="Proteomes" id="UP000005640">
    <property type="component" value="Chromosome 2"/>
</dbReference>
<dbReference type="RNAct" id="P37235">
    <property type="molecule type" value="protein"/>
</dbReference>
<dbReference type="Bgee" id="ENSG00000115756">
    <property type="expression patterns" value="Expressed in cerebellar vermis and 203 other cell types or tissues"/>
</dbReference>
<dbReference type="ExpressionAtlas" id="P37235">
    <property type="expression patterns" value="baseline and differential"/>
</dbReference>
<dbReference type="GO" id="GO:0016020">
    <property type="term" value="C:membrane"/>
    <property type="evidence" value="ECO:0007669"/>
    <property type="project" value="UniProtKB-SubCell"/>
</dbReference>
<dbReference type="GO" id="GO:0005509">
    <property type="term" value="F:calcium ion binding"/>
    <property type="evidence" value="ECO:0000318"/>
    <property type="project" value="GO_Central"/>
</dbReference>
<dbReference type="GO" id="GO:0009966">
    <property type="term" value="P:regulation of signal transduction"/>
    <property type="evidence" value="ECO:0000318"/>
    <property type="project" value="GO_Central"/>
</dbReference>
<dbReference type="CDD" id="cd00051">
    <property type="entry name" value="EFh"/>
    <property type="match status" value="2"/>
</dbReference>
<dbReference type="FunFam" id="1.10.238.10:FF:000078">
    <property type="entry name" value="Hippocalcin-like 1"/>
    <property type="match status" value="1"/>
</dbReference>
<dbReference type="FunFam" id="1.10.238.10:FF:000072">
    <property type="entry name" value="Hippocalcin-like protein 1"/>
    <property type="match status" value="1"/>
</dbReference>
<dbReference type="Gene3D" id="1.10.238.10">
    <property type="entry name" value="EF-hand"/>
    <property type="match status" value="2"/>
</dbReference>
<dbReference type="InterPro" id="IPR011992">
    <property type="entry name" value="EF-hand-dom_pair"/>
</dbReference>
<dbReference type="InterPro" id="IPR018247">
    <property type="entry name" value="EF_Hand_1_Ca_BS"/>
</dbReference>
<dbReference type="InterPro" id="IPR002048">
    <property type="entry name" value="EF_hand_dom"/>
</dbReference>
<dbReference type="InterPro" id="IPR028846">
    <property type="entry name" value="Recoverin"/>
</dbReference>
<dbReference type="PANTHER" id="PTHR23055">
    <property type="entry name" value="CALCIUM BINDING PROTEINS"/>
    <property type="match status" value="1"/>
</dbReference>
<dbReference type="PANTHER" id="PTHR23055:SF79">
    <property type="entry name" value="HIPPOCALCIN-LIKE PROTEIN 1"/>
    <property type="match status" value="1"/>
</dbReference>
<dbReference type="Pfam" id="PF13499">
    <property type="entry name" value="EF-hand_7"/>
    <property type="match status" value="2"/>
</dbReference>
<dbReference type="PRINTS" id="PR00450">
    <property type="entry name" value="RECOVERIN"/>
</dbReference>
<dbReference type="SMART" id="SM00054">
    <property type="entry name" value="EFh"/>
    <property type="match status" value="3"/>
</dbReference>
<dbReference type="SUPFAM" id="SSF47473">
    <property type="entry name" value="EF-hand"/>
    <property type="match status" value="1"/>
</dbReference>
<dbReference type="PROSITE" id="PS00018">
    <property type="entry name" value="EF_HAND_1"/>
    <property type="match status" value="3"/>
</dbReference>
<dbReference type="PROSITE" id="PS50222">
    <property type="entry name" value="EF_HAND_2"/>
    <property type="match status" value="4"/>
</dbReference>
<organism>
    <name type="scientific">Homo sapiens</name>
    <name type="common">Human</name>
    <dbReference type="NCBI Taxonomy" id="9606"/>
    <lineage>
        <taxon>Eukaryota</taxon>
        <taxon>Metazoa</taxon>
        <taxon>Chordata</taxon>
        <taxon>Craniata</taxon>
        <taxon>Vertebrata</taxon>
        <taxon>Euteleostomi</taxon>
        <taxon>Mammalia</taxon>
        <taxon>Eutheria</taxon>
        <taxon>Euarchontoglires</taxon>
        <taxon>Primates</taxon>
        <taxon>Haplorrhini</taxon>
        <taxon>Catarrhini</taxon>
        <taxon>Hominidae</taxon>
        <taxon>Homo</taxon>
    </lineage>
</organism>
<evidence type="ECO:0000250" key="1"/>
<evidence type="ECO:0000255" key="2">
    <source>
        <dbReference type="PROSITE-ProRule" id="PRU00448"/>
    </source>
</evidence>
<evidence type="ECO:0000269" key="3">
    <source>
    </source>
</evidence>
<evidence type="ECO:0000305" key="4"/>
<evidence type="ECO:0007829" key="5">
    <source>
        <dbReference type="PDB" id="5T7C"/>
    </source>
</evidence>
<name>HPCL1_HUMAN</name>
<keyword id="KW-0002">3D-structure</keyword>
<keyword id="KW-0106">Calcium</keyword>
<keyword id="KW-0449">Lipoprotein</keyword>
<keyword id="KW-0472">Membrane</keyword>
<keyword id="KW-0479">Metal-binding</keyword>
<keyword id="KW-0519">Myristate</keyword>
<keyword id="KW-1267">Proteomics identification</keyword>
<keyword id="KW-1185">Reference proteome</keyword>
<keyword id="KW-0677">Repeat</keyword>
<proteinExistence type="evidence at protein level"/>
<comment type="function">
    <text>May be involved in the calcium-dependent regulation of rhodopsin phosphorylation.</text>
</comment>
<comment type="interaction">
    <interactant intactId="EBI-749311">
        <id>P37235</id>
    </interactant>
    <interactant intactId="EBI-17286414">
        <id>A2BDD9</id>
        <label>AMOT</label>
    </interactant>
    <organismsDiffer>false</organismsDiffer>
    <experiments>3</experiments>
</comment>
<comment type="interaction">
    <interactant intactId="EBI-749311">
        <id>P37235</id>
    </interactant>
    <interactant intactId="EBI-930964">
        <id>P54253</id>
        <label>ATXN1</label>
    </interactant>
    <organismsDiffer>false</organismsDiffer>
    <experiments>7</experiments>
</comment>
<comment type="interaction">
    <interactant intactId="EBI-749311">
        <id>P37235</id>
    </interactant>
    <interactant intactId="EBI-12061599">
        <id>Q9H6X5-2</id>
        <label>C19orf44</label>
    </interactant>
    <organismsDiffer>false</organismsDiffer>
    <experiments>4</experiments>
</comment>
<comment type="interaction">
    <interactant intactId="EBI-749311">
        <id>P37235</id>
    </interactant>
    <interactant intactId="EBI-2817707">
        <id>Q9BXJ5</id>
        <label>C1QTNF2</label>
    </interactant>
    <organismsDiffer>false</organismsDiffer>
    <experiments>11</experiments>
</comment>
<comment type="interaction">
    <interactant intactId="EBI-749311">
        <id>P37235</id>
    </interactant>
    <interactant intactId="EBI-12208965">
        <id>P07451</id>
        <label>CA3</label>
    </interactant>
    <organismsDiffer>false</organismsDiffer>
    <experiments>3</experiments>
</comment>
<comment type="interaction">
    <interactant intactId="EBI-749311">
        <id>P37235</id>
    </interactant>
    <interactant intactId="EBI-10263496">
        <id>Q8IYK4</id>
        <label>COLGALT2</label>
    </interactant>
    <organismsDiffer>false</organismsDiffer>
    <experiments>4</experiments>
</comment>
<comment type="interaction">
    <interactant intactId="EBI-749311">
        <id>P37235</id>
    </interactant>
    <interactant intactId="EBI-12884642">
        <id>Q03060-25</id>
        <label>CREM</label>
    </interactant>
    <organismsDiffer>false</organismsDiffer>
    <experiments>6</experiments>
</comment>
<comment type="interaction">
    <interactant intactId="EBI-749311">
        <id>P37235</id>
    </interactant>
    <interactant intactId="EBI-740376">
        <id>Q86UW9</id>
        <label>DTX2</label>
    </interactant>
    <organismsDiffer>false</organismsDiffer>
    <experiments>4</experiments>
</comment>
<comment type="interaction">
    <interactant intactId="EBI-749311">
        <id>P37235</id>
    </interactant>
    <interactant intactId="EBI-743414">
        <id>O95967</id>
        <label>EFEMP2</label>
    </interactant>
    <organismsDiffer>false</organismsDiffer>
    <experiments>3</experiments>
</comment>
<comment type="interaction">
    <interactant intactId="EBI-749311">
        <id>P37235</id>
    </interactant>
    <interactant intactId="EBI-968308">
        <id>P54753</id>
        <label>EPHB3</label>
    </interactant>
    <organismsDiffer>false</organismsDiffer>
    <experiments>3</experiments>
</comment>
<comment type="interaction">
    <interactant intactId="EBI-749311">
        <id>P37235</id>
    </interactant>
    <interactant intactId="EBI-746917">
        <id>O75084</id>
        <label>FZD7</label>
    </interactant>
    <organismsDiffer>false</organismsDiffer>
    <experiments>3</experiments>
</comment>
<comment type="interaction">
    <interactant intactId="EBI-749311">
        <id>P37235</id>
    </interactant>
    <interactant intactId="EBI-12132270">
        <id>Q9BWX5</id>
        <label>GATA5</label>
    </interactant>
    <organismsDiffer>false</organismsDiffer>
    <experiments>3</experiments>
</comment>
<comment type="interaction">
    <interactant intactId="EBI-749311">
        <id>P37235</id>
    </interactant>
    <interactant intactId="EBI-740641">
        <id>Q9NP66</id>
        <label>HMG20A</label>
    </interactant>
    <organismsDiffer>false</organismsDiffer>
    <experiments>4</experiments>
</comment>
<comment type="interaction">
    <interactant intactId="EBI-749311">
        <id>P37235</id>
    </interactant>
    <interactant intactId="EBI-11959885">
        <id>Q07627</id>
        <label>KRTAP1-1</label>
    </interactant>
    <organismsDiffer>false</organismsDiffer>
    <experiments>3</experiments>
</comment>
<comment type="interaction">
    <interactant intactId="EBI-749311">
        <id>P37235</id>
    </interactant>
    <interactant intactId="EBI-11749135">
        <id>Q8IUG1</id>
        <label>KRTAP1-3</label>
    </interactant>
    <organismsDiffer>false</organismsDiffer>
    <experiments>3</experiments>
</comment>
<comment type="interaction">
    <interactant intactId="EBI-749311">
        <id>P37235</id>
    </interactant>
    <interactant intactId="EBI-10172150">
        <id>P60370</id>
        <label>KRTAP10-5</label>
    </interactant>
    <organismsDiffer>false</organismsDiffer>
    <experiments>3</experiments>
</comment>
<comment type="interaction">
    <interactant intactId="EBI-749311">
        <id>P37235</id>
    </interactant>
    <interactant intactId="EBI-10172290">
        <id>P60409</id>
        <label>KRTAP10-7</label>
    </interactant>
    <organismsDiffer>false</organismsDiffer>
    <experiments>3</experiments>
</comment>
<comment type="interaction">
    <interactant intactId="EBI-749311">
        <id>P37235</id>
    </interactant>
    <interactant intactId="EBI-10171774">
        <id>P60410</id>
        <label>KRTAP10-8</label>
    </interactant>
    <organismsDiffer>false</organismsDiffer>
    <experiments>6</experiments>
</comment>
<comment type="interaction">
    <interactant intactId="EBI-749311">
        <id>P37235</id>
    </interactant>
    <interactant intactId="EBI-10172052">
        <id>P60411</id>
        <label>KRTAP10-9</label>
    </interactant>
    <organismsDiffer>false</organismsDiffer>
    <experiments>6</experiments>
</comment>
<comment type="interaction">
    <interactant intactId="EBI-749311">
        <id>P37235</id>
    </interactant>
    <interactant intactId="EBI-11988175">
        <id>Q9BYP8</id>
        <label>KRTAP17-1</label>
    </interactant>
    <organismsDiffer>false</organismsDiffer>
    <experiments>3</experiments>
</comment>
<comment type="interaction">
    <interactant intactId="EBI-749311">
        <id>P37235</id>
    </interactant>
    <interactant intactId="EBI-10172511">
        <id>Q9BYR5</id>
        <label>KRTAP4-2</label>
    </interactant>
    <organismsDiffer>false</organismsDiffer>
    <experiments>3</experiments>
</comment>
<comment type="interaction">
    <interactant intactId="EBI-749311">
        <id>P37235</id>
    </interactant>
    <interactant intactId="EBI-3958099">
        <id>P26371</id>
        <label>KRTAP5-9</label>
    </interactant>
    <organismsDiffer>false</organismsDiffer>
    <experiments>3</experiments>
</comment>
<comment type="interaction">
    <interactant intactId="EBI-749311">
        <id>P37235</id>
    </interactant>
    <interactant intactId="EBI-725647">
        <id>Q99732</id>
        <label>LITAF</label>
    </interactant>
    <organismsDiffer>false</organismsDiffer>
    <experiments>4</experiments>
</comment>
<comment type="interaction">
    <interactant intactId="EBI-749311">
        <id>P37235</id>
    </interactant>
    <interactant intactId="EBI-724076">
        <id>Q99750</id>
        <label>MDFI</label>
    </interactant>
    <organismsDiffer>false</organismsDiffer>
    <experiments>3</experiments>
</comment>
<comment type="interaction">
    <interactant intactId="EBI-749311">
        <id>P37235</id>
    </interactant>
    <interactant intactId="EBI-721306">
        <id>Q99685</id>
        <label>MGLL</label>
    </interactant>
    <organismsDiffer>false</organismsDiffer>
    <experiments>3</experiments>
</comment>
<comment type="interaction">
    <interactant intactId="EBI-749311">
        <id>P37235</id>
    </interactant>
    <interactant intactId="EBI-718622">
        <id>Q969H8</id>
        <label>MYDGF</label>
    </interactant>
    <organismsDiffer>false</organismsDiffer>
    <experiments>4</experiments>
</comment>
<comment type="interaction">
    <interactant intactId="EBI-749311">
        <id>P37235</id>
    </interactant>
    <interactant intactId="EBI-12135485">
        <id>P41271-2</id>
        <label>NBL1</label>
    </interactant>
    <organismsDiffer>false</organismsDiffer>
    <experiments>3</experiments>
</comment>
<comment type="interaction">
    <interactant intactId="EBI-749311">
        <id>P37235</id>
    </interactant>
    <interactant intactId="EBI-945833">
        <id>Q7Z3S9</id>
        <label>NOTCH2NLA</label>
    </interactant>
    <organismsDiffer>false</organismsDiffer>
    <experiments>3</experiments>
</comment>
<comment type="interaction">
    <interactant intactId="EBI-749311">
        <id>P37235</id>
    </interactant>
    <interactant intactId="EBI-22310682">
        <id>P0DPK4</id>
        <label>NOTCH2NLC</label>
    </interactant>
    <organismsDiffer>false</organismsDiffer>
    <experiments>3</experiments>
</comment>
<comment type="interaction">
    <interactant intactId="EBI-749311">
        <id>P37235</id>
    </interactant>
    <interactant intactId="EBI-12253270">
        <id>Q9NWW9</id>
        <label>PLAAT2</label>
    </interactant>
    <organismsDiffer>false</organismsDiffer>
    <experiments>3</experiments>
</comment>
<comment type="interaction">
    <interactant intactId="EBI-749311">
        <id>P37235</id>
    </interactant>
    <interactant intactId="EBI-750144">
        <id>O75830</id>
        <label>SERPINI2</label>
    </interactant>
    <organismsDiffer>false</organismsDiffer>
    <experiments>3</experiments>
</comment>
<comment type="interaction">
    <interactant intactId="EBI-749311">
        <id>P37235</id>
    </interactant>
    <interactant intactId="EBI-5235340">
        <id>Q7Z699</id>
        <label>SPRED1</label>
    </interactant>
    <organismsDiffer>false</organismsDiffer>
    <experiments>3</experiments>
</comment>
<comment type="interaction">
    <interactant intactId="EBI-749311">
        <id>P37235</id>
    </interactant>
    <interactant intactId="EBI-17210651">
        <id>Q9NRR2</id>
        <label>TPSG1</label>
    </interactant>
    <organismsDiffer>false</organismsDiffer>
    <experiments>3</experiments>
</comment>
<comment type="interaction">
    <interactant intactId="EBI-749311">
        <id>P37235</id>
    </interactant>
    <interactant intactId="EBI-11957238">
        <id>Q2TAL6</id>
        <label>VWC2</label>
    </interactant>
    <organismsDiffer>false</organismsDiffer>
    <experiments>3</experiments>
</comment>
<comment type="interaction">
    <interactant intactId="EBI-749311">
        <id>P37235</id>
    </interactant>
    <interactant intactId="EBI-1048893">
        <id>P54577</id>
        <label>YARS1</label>
    </interactant>
    <organismsDiffer>false</organismsDiffer>
    <experiments>3</experiments>
</comment>
<comment type="interaction">
    <interactant intactId="EBI-749311">
        <id>P37235</id>
    </interactant>
    <interactant intactId="EBI-625509">
        <id>Q8N720</id>
        <label>ZNF655</label>
    </interactant>
    <organismsDiffer>false</organismsDiffer>
    <experiments>3</experiments>
</comment>
<comment type="interaction">
    <interactant intactId="EBI-749311">
        <id>P37235</id>
    </interactant>
    <interactant intactId="EBI-6480811">
        <id>Q7DB77</id>
        <label>tir</label>
    </interactant>
    <organismsDiffer>true</organismsDiffer>
    <experiments>3</experiments>
</comment>
<comment type="subcellular location">
    <subcellularLocation>
        <location evidence="4">Membrane</location>
        <topology evidence="4">Lipid-anchor</topology>
    </subcellularLocation>
</comment>
<comment type="miscellaneous">
    <text evidence="1">Probably binds two or three calcium ions.</text>
</comment>
<comment type="similarity">
    <text evidence="4">Belongs to the recoverin family.</text>
</comment>
<protein>
    <recommendedName>
        <fullName>Hippocalcin-like protein 1</fullName>
    </recommendedName>
    <alternativeName>
        <fullName>Calcium-binding protein BDR-1</fullName>
    </alternativeName>
    <alternativeName>
        <fullName>HLP2</fullName>
    </alternativeName>
    <alternativeName>
        <fullName>Visinin-like protein 3</fullName>
        <shortName>VILIP-3</shortName>
    </alternativeName>
</protein>
<sequence>MGKQNSKLRPEVLQDLRENTEFTDHELQEWYKGFLKDCPTGHLTVDEFKKIYANFFPYGDASKFAEHVFRTFDTNGDGTIDFREFIIALSVTSRGKLEQKLKWAFSMYDLDGNGYISRSEMLEIVQAIYKMVSSVMKMPEDESTPEKRTDKIFRQMDTNNDGKLSLEEFIRGAKSDPSIVRLLQCDPSSASQF</sequence>
<gene>
    <name type="primary">HPCAL1</name>
    <name type="synonym">BDR1</name>
</gene>
<reference key="1">
    <citation type="journal article" date="1994" name="Biochim. Biophys. Acta">
        <title>Molecular cloning of a novel calcium-binding protein structurally related to hippocalcin from human brain and chromosomal mapping of its gene.</title>
        <authorList>
            <person name="Kobayashi M."/>
            <person name="Takamatsu K."/>
            <person name="Fujishiro M."/>
            <person name="Saitoh S."/>
            <person name="Noguchi T."/>
        </authorList>
    </citation>
    <scope>NUCLEOTIDE SEQUENCE [MRNA]</scope>
    <source>
        <tissue>Brain</tissue>
    </source>
</reference>
<reference key="2">
    <citation type="journal article" date="2004" name="Genome Res.">
        <title>The status, quality, and expansion of the NIH full-length cDNA project: the Mammalian Gene Collection (MGC).</title>
        <authorList>
            <consortium name="The MGC Project Team"/>
        </authorList>
    </citation>
    <scope>NUCLEOTIDE SEQUENCE [LARGE SCALE MRNA]</scope>
    <source>
        <tissue>Brain</tissue>
        <tissue>Pancreas</tissue>
    </source>
</reference>
<reference key="3">
    <citation type="journal article" date="2011" name="BMC Syst. Biol.">
        <title>Initial characterization of the human central proteome.</title>
        <authorList>
            <person name="Burkard T.R."/>
            <person name="Planyavsky M."/>
            <person name="Kaupe I."/>
            <person name="Breitwieser F.P."/>
            <person name="Buerckstuemmer T."/>
            <person name="Bennett K.L."/>
            <person name="Superti-Furga G."/>
            <person name="Colinge J."/>
        </authorList>
    </citation>
    <scope>IDENTIFICATION BY MASS SPECTROMETRY [LARGE SCALE ANALYSIS]</scope>
</reference>
<reference key="4">
    <citation type="journal article" date="2014" name="J. Proteomics">
        <title>An enzyme assisted RP-RPLC approach for in-depth analysis of human liver phosphoproteome.</title>
        <authorList>
            <person name="Bian Y."/>
            <person name="Song C."/>
            <person name="Cheng K."/>
            <person name="Dong M."/>
            <person name="Wang F."/>
            <person name="Huang J."/>
            <person name="Sun D."/>
            <person name="Wang L."/>
            <person name="Ye M."/>
            <person name="Zou H."/>
        </authorList>
    </citation>
    <scope>IDENTIFICATION BY MASS SPECTROMETRY [LARGE SCALE ANALYSIS]</scope>
    <source>
        <tissue>Liver</tissue>
    </source>
</reference>
<reference key="5">
    <citation type="journal article" date="2014" name="Nat. Commun.">
        <title>Global profiling of co- and post-translationally N-myristoylated proteomes in human cells.</title>
        <authorList>
            <person name="Thinon E."/>
            <person name="Serwa R.A."/>
            <person name="Broncel M."/>
            <person name="Brannigan J.A."/>
            <person name="Brassat U."/>
            <person name="Wright M.H."/>
            <person name="Heal W.P."/>
            <person name="Wilkinson A.J."/>
            <person name="Mann D.J."/>
            <person name="Tate E.W."/>
        </authorList>
    </citation>
    <scope>MYRISTOYLATION AT GLY-2</scope>
    <scope>CLEAVAGE OF INITIATOR METHIONINE</scope>
    <scope>IDENTIFICATION BY MASS SPECTROMETRY</scope>
</reference>
<accession>P37235</accession>
<accession>Q969S5</accession>
<feature type="initiator methionine" description="Removed" evidence="3">
    <location>
        <position position="1"/>
    </location>
</feature>
<feature type="chain" id="PRO_0000073771" description="Hippocalcin-like protein 1">
    <location>
        <begin position="2"/>
        <end position="193"/>
    </location>
</feature>
<feature type="domain" description="EF-hand 1" evidence="2">
    <location>
        <begin position="41"/>
        <end position="58"/>
    </location>
</feature>
<feature type="domain" description="EF-hand 2" evidence="2">
    <location>
        <begin position="60"/>
        <end position="95"/>
    </location>
</feature>
<feature type="domain" description="EF-hand 3" evidence="2">
    <location>
        <begin position="96"/>
        <end position="131"/>
    </location>
</feature>
<feature type="domain" description="EF-hand 4" evidence="2">
    <location>
        <begin position="144"/>
        <end position="179"/>
    </location>
</feature>
<feature type="binding site" evidence="2">
    <location>
        <position position="73"/>
    </location>
    <ligand>
        <name>Ca(2+)</name>
        <dbReference type="ChEBI" id="CHEBI:29108"/>
        <label>1</label>
    </ligand>
</feature>
<feature type="binding site" evidence="2">
    <location>
        <position position="75"/>
    </location>
    <ligand>
        <name>Ca(2+)</name>
        <dbReference type="ChEBI" id="CHEBI:29108"/>
        <label>1</label>
    </ligand>
</feature>
<feature type="binding site" evidence="2">
    <location>
        <position position="77"/>
    </location>
    <ligand>
        <name>Ca(2+)</name>
        <dbReference type="ChEBI" id="CHEBI:29108"/>
        <label>1</label>
    </ligand>
</feature>
<feature type="binding site" evidence="2">
    <location>
        <position position="79"/>
    </location>
    <ligand>
        <name>Ca(2+)</name>
        <dbReference type="ChEBI" id="CHEBI:29108"/>
        <label>1</label>
    </ligand>
</feature>
<feature type="binding site" evidence="2">
    <location>
        <position position="84"/>
    </location>
    <ligand>
        <name>Ca(2+)</name>
        <dbReference type="ChEBI" id="CHEBI:29108"/>
        <label>1</label>
    </ligand>
</feature>
<feature type="binding site" evidence="2">
    <location>
        <position position="109"/>
    </location>
    <ligand>
        <name>Ca(2+)</name>
        <dbReference type="ChEBI" id="CHEBI:29108"/>
        <label>2</label>
    </ligand>
</feature>
<feature type="binding site" evidence="2">
    <location>
        <position position="111"/>
    </location>
    <ligand>
        <name>Ca(2+)</name>
        <dbReference type="ChEBI" id="CHEBI:29108"/>
        <label>2</label>
    </ligand>
</feature>
<feature type="binding site" evidence="2">
    <location>
        <position position="113"/>
    </location>
    <ligand>
        <name>Ca(2+)</name>
        <dbReference type="ChEBI" id="CHEBI:29108"/>
        <label>2</label>
    </ligand>
</feature>
<feature type="binding site" evidence="2">
    <location>
        <position position="115"/>
    </location>
    <ligand>
        <name>Ca(2+)</name>
        <dbReference type="ChEBI" id="CHEBI:29108"/>
        <label>2</label>
    </ligand>
</feature>
<feature type="binding site" evidence="2">
    <location>
        <position position="120"/>
    </location>
    <ligand>
        <name>Ca(2+)</name>
        <dbReference type="ChEBI" id="CHEBI:29108"/>
        <label>2</label>
    </ligand>
</feature>
<feature type="binding site" evidence="2">
    <location>
        <position position="157"/>
    </location>
    <ligand>
        <name>Ca(2+)</name>
        <dbReference type="ChEBI" id="CHEBI:29108"/>
        <label>3</label>
    </ligand>
</feature>
<feature type="binding site" evidence="2">
    <location>
        <position position="159"/>
    </location>
    <ligand>
        <name>Ca(2+)</name>
        <dbReference type="ChEBI" id="CHEBI:29108"/>
        <label>3</label>
    </ligand>
</feature>
<feature type="binding site" evidence="2">
    <location>
        <position position="161"/>
    </location>
    <ligand>
        <name>Ca(2+)</name>
        <dbReference type="ChEBI" id="CHEBI:29108"/>
        <label>3</label>
    </ligand>
</feature>
<feature type="binding site" evidence="2">
    <location>
        <position position="163"/>
    </location>
    <ligand>
        <name>Ca(2+)</name>
        <dbReference type="ChEBI" id="CHEBI:29108"/>
        <label>3</label>
    </ligand>
</feature>
<feature type="binding site" evidence="2">
    <location>
        <position position="168"/>
    </location>
    <ligand>
        <name>Ca(2+)</name>
        <dbReference type="ChEBI" id="CHEBI:29108"/>
        <label>3</label>
    </ligand>
</feature>
<feature type="lipid moiety-binding region" description="N-myristoyl glycine" evidence="3">
    <location>
        <position position="2"/>
    </location>
</feature>
<feature type="sequence conflict" description="In Ref. 1; BAA03754." evidence="4" ref="1">
    <original>N</original>
    <variation>K</variation>
    <location>
        <position position="19"/>
    </location>
</feature>
<feature type="sequence conflict" description="In Ref. 1; BAA03754." evidence="4" ref="1">
    <original>A</original>
    <variation>G</variation>
    <location>
        <position position="88"/>
    </location>
</feature>
<feature type="sequence conflict" description="In Ref. 1; BAA03754." evidence="4" ref="1">
    <original>SR</original>
    <variation>RG</variation>
    <location>
        <begin position="93"/>
        <end position="94"/>
    </location>
</feature>
<feature type="helix" evidence="5">
    <location>
        <begin position="10"/>
        <end position="14"/>
    </location>
</feature>
<feature type="helix" evidence="5">
    <location>
        <begin position="25"/>
        <end position="35"/>
    </location>
</feature>
<feature type="strand" evidence="5">
    <location>
        <begin position="37"/>
        <end position="40"/>
    </location>
</feature>
<feature type="helix" evidence="5">
    <location>
        <begin position="46"/>
        <end position="54"/>
    </location>
</feature>
<feature type="helix" evidence="5">
    <location>
        <begin position="61"/>
        <end position="71"/>
    </location>
</feature>
<feature type="strand" evidence="5">
    <location>
        <begin position="75"/>
        <end position="77"/>
    </location>
</feature>
<feature type="helix" evidence="5">
    <location>
        <begin position="82"/>
        <end position="89"/>
    </location>
</feature>
<feature type="helix" evidence="5">
    <location>
        <begin position="97"/>
        <end position="105"/>
    </location>
</feature>
<feature type="strand" evidence="5">
    <location>
        <begin position="110"/>
        <end position="114"/>
    </location>
</feature>
<feature type="helix" evidence="5">
    <location>
        <begin position="118"/>
        <end position="132"/>
    </location>
</feature>
<feature type="helix" evidence="5">
    <location>
        <begin position="146"/>
        <end position="156"/>
    </location>
</feature>
<feature type="helix" evidence="5">
    <location>
        <begin position="167"/>
        <end position="174"/>
    </location>
</feature>
<feature type="helix" evidence="5">
    <location>
        <begin position="176"/>
        <end position="182"/>
    </location>
</feature>